<organismHost>
    <name type="scientific">Bos taurus</name>
    <name type="common">Bovine</name>
    <dbReference type="NCBI Taxonomy" id="9913"/>
</organismHost>
<reference key="1">
    <citation type="journal article" date="1990" name="Mol. Cell. Biol.">
        <title>Identification of rpo30, a vaccinia virus RNA polymerase gene with structural similarity to a eucaryotic transcription elongation factor.</title>
        <authorList>
            <person name="Ahn B.-Y."/>
            <person name="Gershon P.D."/>
            <person name="Jones E.V."/>
            <person name="Moss B."/>
        </authorList>
    </citation>
    <scope>NUCLEOTIDE SEQUENCE [GENOMIC DNA]</scope>
</reference>
<reference key="2">
    <citation type="submission" date="2003-02" db="EMBL/GenBank/DDBJ databases">
        <title>Sequencing of the coding region of Vaccinia-WR to an average 9-fold redundancy and an error rate of 0.16/10kb.</title>
        <authorList>
            <person name="Esposito J.J."/>
            <person name="Frace A.M."/>
            <person name="Sammons S.A."/>
            <person name="Olsen-Rasmussen M."/>
            <person name="Osborne J."/>
            <person name="Wohlhueter R."/>
        </authorList>
    </citation>
    <scope>NUCLEOTIDE SEQUENCE [LARGE SCALE GENOMIC DNA]</scope>
</reference>
<reference key="3">
    <citation type="journal article" date="1986" name="Proc. Natl. Acad. Sci. U.S.A.">
        <title>Homology between DNA polymerases of poxviruses, herpesviruses, and adenoviruses: nucleotide sequence of the vaccinia virus DNA polymerase gene.</title>
        <authorList>
            <person name="Earl P.L."/>
            <person name="Jones E.V."/>
            <person name="Moss B."/>
        </authorList>
    </citation>
    <scope>NUCLEOTIDE SEQUENCE [GENOMIC DNA] OF 40-962</scope>
</reference>
<reference key="4">
    <citation type="journal article" date="1989" name="J. Virol.">
        <title>Molecular genetic analysis of vaccinia virus DNA polymerase mutants.</title>
        <authorList>
            <person name="Traktman P."/>
            <person name="Kelvin M."/>
            <person name="Pacheco S."/>
        </authorList>
    </citation>
    <scope>MUTANTS TS42; NG26 AND PAARVG</scope>
</reference>
<reference key="5">
    <citation type="journal article" date="2001" name="J. Virol.">
        <title>The A20R protein is a stoichiometric component of the processive form of vaccinia virus DNA polymerase.</title>
        <authorList>
            <person name="Klemperer N."/>
            <person name="McDonald W."/>
            <person name="Boyle K."/>
            <person name="Unger B."/>
            <person name="Traktman P."/>
        </authorList>
    </citation>
    <scope>INTERACTION WITH A20</scope>
</reference>
<reference key="6">
    <citation type="journal article" date="2005" name="Nucleic Acids Res.">
        <title>Enzymatic processing of replication and recombination intermediates by the vaccinia virus DNA polymerase.</title>
        <authorList>
            <person name="Hamilton M.D."/>
            <person name="Evans D.H."/>
        </authorList>
    </citation>
    <scope>FUNCTION</scope>
</reference>
<reference key="7">
    <citation type="journal article" date="2006" name="J. Biol. Chem.">
        <title>Vaccinia virus uracil DNA glycosylase interacts with the A20 protein to form a heterodimeric processivity factor for the viral DNA polymerase.</title>
        <authorList>
            <person name="Stanitsa E.S."/>
            <person name="Arps L."/>
            <person name="Traktman P."/>
        </authorList>
    </citation>
    <scope>IDENTIFICATION IN A COMPLEX WITH UDG/D4 AND A20</scope>
</reference>
<reference key="8">
    <citation type="journal article" date="2011" name="J. Biol. Chem.">
        <title>Evaluation of the role of the vaccinia virus uracil DNA glycosylase and A20 proteins as intrinsic components of the DNA polymerase holoenzyme.</title>
        <authorList>
            <person name="Boyle K.A."/>
            <person name="Stanitsa E.S."/>
            <person name="Greseth M.D."/>
            <person name="Lindgren J.K."/>
            <person name="Traktman P."/>
        </authorList>
    </citation>
    <scope>IDENTIFICATION IN A COMPLEX WITH OPG116/D4 AND OPG148/A20</scope>
</reference>
<reference key="9">
    <citation type="journal article" date="2015" name="J. Virol.">
        <title>Deciphering poxvirus gene expression by RNA sequencing and ribosome profiling.</title>
        <authorList>
            <person name="Yang Z."/>
            <person name="Cao S."/>
            <person name="Martens C.A."/>
            <person name="Porcella S.F."/>
            <person name="Xie Z."/>
            <person name="Ma M."/>
            <person name="Shen B."/>
            <person name="Moss B."/>
        </authorList>
    </citation>
    <scope>INDUCTION</scope>
</reference>
<feature type="chain" id="PRO_0000046533" description="DNA polymerase">
    <location>
        <begin position="1"/>
        <end position="1006"/>
    </location>
</feature>
<feature type="sequence variant" description="In PAA-R mutant; phosphonoacetate-resistant.">
    <original>S</original>
    <variation>F</variation>
    <location>
        <position position="338"/>
    </location>
</feature>
<feature type="sequence variant" description="In PAA-R, NG26 and PAArVg mutants; phosphonoacetate-resistant.">
    <original>G</original>
    <variation>D</variation>
    <location>
        <position position="372"/>
    </location>
</feature>
<feature type="sequence variant" description="In NG26 mutant; temperature-sensitivity.">
    <original>G</original>
    <variation>D</variation>
    <location>
        <position position="392"/>
    </location>
</feature>
<feature type="sequence variant" description="In ts42 mutant; temperature-sensitivity.">
    <original>E</original>
    <variation>K</variation>
    <location>
        <position position="611"/>
    </location>
</feature>
<feature type="sequence conflict" description="In Ref. 2; AAO89344." evidence="6" ref="2">
    <original>Y</original>
    <variation>H</variation>
    <location>
        <position position="296"/>
    </location>
</feature>
<proteinExistence type="evidence at protein level"/>
<gene>
    <name type="primary">OPG071</name>
    <name type="synonym">POL</name>
    <name type="ordered locus">VACWR065</name>
    <name type="ORF">E9L</name>
</gene>
<sequence length="1006" mass="116929">MDVRCINWFESHGENRFLYLKSRCRNGETVFIRFPHYFYYVVTDEIYQSLSPPPFNARPLGKMRTIDIDETISYNLDIKDRKCSVADMWLIEEPKKRSIQNATMDEFLNISWFYISNGISPDGCYSLDEQYLTKINNGCYHCDDPRNCFAKKIPRFDIPRSYLFLDIECHFDKKFPSVFINPISHTSYCYIDLSGKRLLFTLINEEMLTEQEIQEAVDRGCLRIQSLMEMDYERELVLCSEIVLLRIAKQLLELTFDYVVTFNGHNFDLRYITNRLELLTGEKIIFRSPDKKEAVYLCIYERNQSSHKGVGGMANTTFHVNNNNGTIFFDLYSFIQKSEKLDSYKLDSISKNAFSCMGKVLNRGVREMTFIGDDTTDAKGKAAAFAKVLTTGNYVTVDEDIICKVIRKDIWENGFKVVLLCPTLPNDTYKLSFGKDDVDLAQMYKDYNLNIALDMARYCIHDACLCQYLWEYYGVETKTDAGASTYVLPQSMVFEYRASTVIKGPLLKLLLETKTILVRSETKQKFPYEGGKVFAPKQKMFSNNVLIFDYNSLYPNVCIFGNLSPETLVGVVVSTNRLEEEINNQLLLQKYPPPRYITVHCEPRLPNLISEIAIFDRSIEGTIPRLLRTFLAERARYKKMLKQATSSTEKAIYDSMQYTYKIVANSVYGLMGFRNSALYSYASAKSCTSIGRRMILYLESVLNGAELSNGMLRFANPLSNPFYMDDRDINPIVKTSLPIDYRFRFRSVYGDTDSVFTEIDSQDVDKSIEIAKELERLINNRVLFNNFKIEFEAVYKNLIMQSKKKYTTMKYSASSNSKSVPERINKGTSETRRDVSKFHKNMIKTYKTRLSEMLSEGRMNSNQVCIDILRSLETDLRSEFDSRSSPLELFMLSRMHHSNYKSADNPNMYLVTEYNKNNPETIELGERYYFAYICPANVPWTKKLVNIKTYETIIDRSFKLGSDQRIFYEVYFKRLTSEIVNLLDNKVLCISFFERMFGSKPTFYEA</sequence>
<comment type="function">
    <text evidence="2">Catalyzes DNA synthesis. Acquires processivity by associating with a heterodimeric processivity factor comprised of the viral OPG148/A20 and OPG116/D4 proteins, thereby forming the DNA polymerase holoenzyme. Displays 3'- to 5' exonuclease activity. Might participate in viral DNA recombination. Does not perform OPG116/D4synthesis across an abasic site.</text>
</comment>
<comment type="catalytic activity">
    <reaction>
        <text>DNA(n) + a 2'-deoxyribonucleoside 5'-triphosphate = DNA(n+1) + diphosphate</text>
        <dbReference type="Rhea" id="RHEA:22508"/>
        <dbReference type="Rhea" id="RHEA-COMP:17339"/>
        <dbReference type="Rhea" id="RHEA-COMP:17340"/>
        <dbReference type="ChEBI" id="CHEBI:33019"/>
        <dbReference type="ChEBI" id="CHEBI:61560"/>
        <dbReference type="ChEBI" id="CHEBI:173112"/>
        <dbReference type="EC" id="2.7.7.7"/>
    </reaction>
</comment>
<comment type="subunit">
    <text evidence="1 3 4">Interacts with OPG148/A20. Component of the Uracil-DNA glycosylase(UDG)-OPG148/A20-polymerase complex; OPG148/A20 and OPG116/UDG form a heterodimeric processivity factor that associates with OPG071/E9 to form the processive polymerase holoenzyme.</text>
</comment>
<comment type="interaction">
    <interactant intactId="EBI-984665">
        <id>P06856</id>
    </interactant>
    <interactant intactId="EBI-8039061">
        <id>Q49PH7</id>
        <label>A20R</label>
    </interactant>
    <organismsDiffer>true</organismsDiffer>
    <experiments>3</experiments>
</comment>
<comment type="induction">
    <text evidence="5">Expressed in the early phase of the viral replicative cycle.</text>
</comment>
<comment type="miscellaneous">
    <text>Ts42 is a temperature-sensitive mutant. PAArVg is a mutant resistant to the drug phosphonoacetic acid (PAA). NG26 is a double mutant with a temperature-sensitive lesion and a mutation rendering the virus resistant to PAA.</text>
</comment>
<comment type="similarity">
    <text evidence="6">Belongs to the DNA polymerase type-B family.</text>
</comment>
<comment type="sequence caution" evidence="6">
    <conflict type="erroneous initiation">
        <sequence resource="EMBL-CDS" id="AAA98419"/>
    </conflict>
</comment>
<comment type="sequence caution" evidence="6">
    <conflict type="frameshift">
        <sequence resource="EMBL-CDS" id="AAA98419"/>
    </conflict>
</comment>
<organism>
    <name type="scientific">Vaccinia virus (strain Western Reserve)</name>
    <name type="common">VACV</name>
    <name type="synonym">Vaccinia virus (strain WR)</name>
    <dbReference type="NCBI Taxonomy" id="10254"/>
    <lineage>
        <taxon>Viruses</taxon>
        <taxon>Varidnaviria</taxon>
        <taxon>Bamfordvirae</taxon>
        <taxon>Nucleocytoviricota</taxon>
        <taxon>Pokkesviricetes</taxon>
        <taxon>Chitovirales</taxon>
        <taxon>Poxviridae</taxon>
        <taxon>Chordopoxvirinae</taxon>
        <taxon>Orthopoxvirus</taxon>
        <taxon>Vaccinia virus</taxon>
    </lineage>
</organism>
<evidence type="ECO:0000269" key="1">
    <source>
    </source>
</evidence>
<evidence type="ECO:0000269" key="2">
    <source>
    </source>
</evidence>
<evidence type="ECO:0000269" key="3">
    <source>
    </source>
</evidence>
<evidence type="ECO:0000269" key="4">
    <source>
    </source>
</evidence>
<evidence type="ECO:0000269" key="5">
    <source>
    </source>
</evidence>
<evidence type="ECO:0000305" key="6"/>
<accession>P06856</accession>
<accession>Q76ZV6</accession>
<name>DPOL_VACCW</name>
<keyword id="KW-0233">DNA recombination</keyword>
<keyword id="KW-0235">DNA replication</keyword>
<keyword id="KW-0238">DNA-binding</keyword>
<keyword id="KW-0239">DNA-directed DNA polymerase</keyword>
<keyword id="KW-0244">Early protein</keyword>
<keyword id="KW-0378">Hydrolase</keyword>
<keyword id="KW-0511">Multifunctional enzyme</keyword>
<keyword id="KW-0548">Nucleotidyltransferase</keyword>
<keyword id="KW-1185">Reference proteome</keyword>
<keyword id="KW-0808">Transferase</keyword>
<keyword id="KW-1194">Viral DNA replication</keyword>
<protein>
    <recommendedName>
        <fullName>DNA polymerase</fullName>
        <ecNumber>2.7.7.7</ecNumber>
    </recommendedName>
    <domain>
        <recommendedName>
            <fullName>3'-5' exodeoxyribonuclease</fullName>
            <shortName>3'-5' exonuclease</shortName>
            <ecNumber>3.1.11.-</ecNumber>
        </recommendedName>
    </domain>
</protein>
<dbReference type="EC" id="2.7.7.7"/>
<dbReference type="EC" id="3.1.11.-"/>
<dbReference type="EMBL" id="M36339">
    <property type="protein sequence ID" value="AAB59829.1"/>
    <property type="molecule type" value="Genomic_DNA"/>
</dbReference>
<dbReference type="EMBL" id="AY243312">
    <property type="protein sequence ID" value="AAO89344.1"/>
    <property type="molecule type" value="Genomic_DNA"/>
</dbReference>
<dbReference type="EMBL" id="M13213">
    <property type="protein sequence ID" value="AAA98419.1"/>
    <property type="status" value="ALT_SEQ"/>
    <property type="molecule type" value="Genomic_DNA"/>
</dbReference>
<dbReference type="PIR" id="A24878">
    <property type="entry name" value="A24878"/>
</dbReference>
<dbReference type="PIR" id="A25270">
    <property type="entry name" value="DJVZZW"/>
</dbReference>
<dbReference type="SMR" id="P06856"/>
<dbReference type="IntAct" id="P06856">
    <property type="interactions" value="2"/>
</dbReference>
<dbReference type="MINT" id="P06856"/>
<dbReference type="BindingDB" id="P06856"/>
<dbReference type="ChEMBL" id="CHEMBL3988586"/>
<dbReference type="KEGG" id="vg:3707598"/>
<dbReference type="Proteomes" id="UP000000344">
    <property type="component" value="Genome"/>
</dbReference>
<dbReference type="GO" id="GO:0008408">
    <property type="term" value="F:3'-5' exonuclease activity"/>
    <property type="evidence" value="ECO:0000314"/>
    <property type="project" value="UniProtKB"/>
</dbReference>
<dbReference type="GO" id="GO:0003677">
    <property type="term" value="F:DNA binding"/>
    <property type="evidence" value="ECO:0007669"/>
    <property type="project" value="UniProtKB-KW"/>
</dbReference>
<dbReference type="GO" id="GO:0003887">
    <property type="term" value="F:DNA-directed DNA polymerase activity"/>
    <property type="evidence" value="ECO:0000314"/>
    <property type="project" value="UniProtKB"/>
</dbReference>
<dbReference type="GO" id="GO:0000166">
    <property type="term" value="F:nucleotide binding"/>
    <property type="evidence" value="ECO:0007669"/>
    <property type="project" value="InterPro"/>
</dbReference>
<dbReference type="GO" id="GO:0006310">
    <property type="term" value="P:DNA recombination"/>
    <property type="evidence" value="ECO:0007669"/>
    <property type="project" value="UniProtKB-KW"/>
</dbReference>
<dbReference type="GO" id="GO:0006261">
    <property type="term" value="P:DNA-templated DNA replication"/>
    <property type="evidence" value="ECO:0007669"/>
    <property type="project" value="TreeGrafter"/>
</dbReference>
<dbReference type="GO" id="GO:0039693">
    <property type="term" value="P:viral DNA genome replication"/>
    <property type="evidence" value="ECO:0000314"/>
    <property type="project" value="UniProtKB"/>
</dbReference>
<dbReference type="FunFam" id="1.10.287.690:FF:000010">
    <property type="entry name" value="DNA polymerase"/>
    <property type="match status" value="1"/>
</dbReference>
<dbReference type="Gene3D" id="1.10.287.690">
    <property type="entry name" value="Helix hairpin bin"/>
    <property type="match status" value="1"/>
</dbReference>
<dbReference type="Gene3D" id="3.90.1600.10">
    <property type="entry name" value="Palm domain of DNA polymerase"/>
    <property type="match status" value="2"/>
</dbReference>
<dbReference type="Gene3D" id="3.30.420.10">
    <property type="entry name" value="Ribonuclease H-like superfamily/Ribonuclease H"/>
    <property type="match status" value="1"/>
</dbReference>
<dbReference type="InterPro" id="IPR006172">
    <property type="entry name" value="DNA-dir_DNA_pol_B"/>
</dbReference>
<dbReference type="InterPro" id="IPR017964">
    <property type="entry name" value="DNA-dir_DNA_pol_B_CS"/>
</dbReference>
<dbReference type="InterPro" id="IPR006133">
    <property type="entry name" value="DNA-dir_DNA_pol_B_exonuc"/>
</dbReference>
<dbReference type="InterPro" id="IPR006134">
    <property type="entry name" value="DNA-dir_DNA_pol_B_multi_dom"/>
</dbReference>
<dbReference type="InterPro" id="IPR013617">
    <property type="entry name" value="DNA-dir_DNA_pol_B_vir_insert"/>
</dbReference>
<dbReference type="InterPro" id="IPR043502">
    <property type="entry name" value="DNA/RNA_pol_sf"/>
</dbReference>
<dbReference type="InterPro" id="IPR023211">
    <property type="entry name" value="DNA_pol_palm_dom_sf"/>
</dbReference>
<dbReference type="InterPro" id="IPR050240">
    <property type="entry name" value="DNA_pol_type-B"/>
</dbReference>
<dbReference type="InterPro" id="IPR013660">
    <property type="entry name" value="DNApol_B_exo_N"/>
</dbReference>
<dbReference type="InterPro" id="IPR012337">
    <property type="entry name" value="RNaseH-like_sf"/>
</dbReference>
<dbReference type="InterPro" id="IPR036397">
    <property type="entry name" value="RNaseH_sf"/>
</dbReference>
<dbReference type="PANTHER" id="PTHR10322">
    <property type="entry name" value="DNA POLYMERASE CATALYTIC SUBUNIT"/>
    <property type="match status" value="1"/>
</dbReference>
<dbReference type="PANTHER" id="PTHR10322:SF23">
    <property type="entry name" value="DNA POLYMERASE DELTA CATALYTIC SUBUNIT"/>
    <property type="match status" value="1"/>
</dbReference>
<dbReference type="Pfam" id="PF00136">
    <property type="entry name" value="DNA_pol_B"/>
    <property type="match status" value="1"/>
</dbReference>
<dbReference type="Pfam" id="PF08408">
    <property type="entry name" value="DNA_pol_B_3"/>
    <property type="match status" value="1"/>
</dbReference>
<dbReference type="Pfam" id="PF03104">
    <property type="entry name" value="DNA_pol_B_exo1"/>
    <property type="match status" value="1"/>
</dbReference>
<dbReference type="Pfam" id="PF08452">
    <property type="entry name" value="DNAP_B_exo_N"/>
    <property type="match status" value="1"/>
</dbReference>
<dbReference type="PRINTS" id="PR00106">
    <property type="entry name" value="DNAPOLB"/>
</dbReference>
<dbReference type="SMART" id="SM00486">
    <property type="entry name" value="POLBc"/>
    <property type="match status" value="1"/>
</dbReference>
<dbReference type="SUPFAM" id="SSF56672">
    <property type="entry name" value="DNA/RNA polymerases"/>
    <property type="match status" value="1"/>
</dbReference>
<dbReference type="SUPFAM" id="SSF53098">
    <property type="entry name" value="Ribonuclease H-like"/>
    <property type="match status" value="1"/>
</dbReference>
<dbReference type="PROSITE" id="PS00116">
    <property type="entry name" value="DNA_POLYMERASE_B"/>
    <property type="match status" value="1"/>
</dbReference>